<gene>
    <name evidence="1" type="primary">pqqE</name>
    <name type="ordered locus">PSPTO_0509</name>
</gene>
<protein>
    <recommendedName>
        <fullName evidence="1">PqqA peptide cyclase</fullName>
        <ecNumber evidence="1">1.21.98.4</ecNumber>
    </recommendedName>
    <alternativeName>
        <fullName evidence="1">Coenzyme PQQ synthesis protein E</fullName>
    </alternativeName>
    <alternativeName>
        <fullName evidence="1">Pyrroloquinoline quinone biosynthesis protein E</fullName>
    </alternativeName>
</protein>
<keyword id="KW-0004">4Fe-4S</keyword>
<keyword id="KW-0408">Iron</keyword>
<keyword id="KW-0411">Iron-sulfur</keyword>
<keyword id="KW-0479">Metal-binding</keyword>
<keyword id="KW-0560">Oxidoreductase</keyword>
<keyword id="KW-0884">PQQ biosynthesis</keyword>
<keyword id="KW-1185">Reference proteome</keyword>
<keyword id="KW-0949">S-adenosyl-L-methionine</keyword>
<reference key="1">
    <citation type="journal article" date="2003" name="Proc. Natl. Acad. Sci. U.S.A.">
        <title>The complete genome sequence of the Arabidopsis and tomato pathogen Pseudomonas syringae pv. tomato DC3000.</title>
        <authorList>
            <person name="Buell C.R."/>
            <person name="Joardar V."/>
            <person name="Lindeberg M."/>
            <person name="Selengut J."/>
            <person name="Paulsen I.T."/>
            <person name="Gwinn M.L."/>
            <person name="Dodson R.J."/>
            <person name="DeBoy R.T."/>
            <person name="Durkin A.S."/>
            <person name="Kolonay J.F."/>
            <person name="Madupu R."/>
            <person name="Daugherty S.C."/>
            <person name="Brinkac L.M."/>
            <person name="Beanan M.J."/>
            <person name="Haft D.H."/>
            <person name="Nelson W.C."/>
            <person name="Davidsen T.M."/>
            <person name="Zafar N."/>
            <person name="Zhou L."/>
            <person name="Liu J."/>
            <person name="Yuan Q."/>
            <person name="Khouri H.M."/>
            <person name="Fedorova N.B."/>
            <person name="Tran B."/>
            <person name="Russell D."/>
            <person name="Berry K.J."/>
            <person name="Utterback T.R."/>
            <person name="Van Aken S.E."/>
            <person name="Feldblyum T.V."/>
            <person name="D'Ascenzo M."/>
            <person name="Deng W.-L."/>
            <person name="Ramos A.R."/>
            <person name="Alfano J.R."/>
            <person name="Cartinhour S."/>
            <person name="Chatterjee A.K."/>
            <person name="Delaney T.P."/>
            <person name="Lazarowitz S.G."/>
            <person name="Martin G.B."/>
            <person name="Schneider D.J."/>
            <person name="Tang X."/>
            <person name="Bender C.L."/>
            <person name="White O."/>
            <person name="Fraser C.M."/>
            <person name="Collmer A."/>
        </authorList>
    </citation>
    <scope>NUCLEOTIDE SEQUENCE [LARGE SCALE GENOMIC DNA]</scope>
    <source>
        <strain>ATCC BAA-871 / DC3000</strain>
    </source>
</reference>
<feature type="chain" id="PRO_0000219948" description="PqqA peptide cyclase">
    <location>
        <begin position="1"/>
        <end position="389"/>
    </location>
</feature>
<feature type="domain" description="Radical SAM core" evidence="2">
    <location>
        <begin position="19"/>
        <end position="234"/>
    </location>
</feature>
<feature type="binding site" evidence="1">
    <location>
        <position position="33"/>
    </location>
    <ligand>
        <name>[4Fe-4S] cluster</name>
        <dbReference type="ChEBI" id="CHEBI:49883"/>
        <note>4Fe-4S-S-AdoMet</note>
    </ligand>
</feature>
<feature type="binding site" evidence="1">
    <location>
        <position position="37"/>
    </location>
    <ligand>
        <name>[4Fe-4S] cluster</name>
        <dbReference type="ChEBI" id="CHEBI:49883"/>
        <note>4Fe-4S-S-AdoMet</note>
    </ligand>
</feature>
<feature type="binding site" evidence="1">
    <location>
        <position position="40"/>
    </location>
    <ligand>
        <name>[4Fe-4S] cluster</name>
        <dbReference type="ChEBI" id="CHEBI:49883"/>
        <note>4Fe-4S-S-AdoMet</note>
    </ligand>
</feature>
<accession>Q88A84</accession>
<dbReference type="EC" id="1.21.98.4" evidence="1"/>
<dbReference type="EMBL" id="AE016853">
    <property type="protein sequence ID" value="AAO54052.1"/>
    <property type="molecule type" value="Genomic_DNA"/>
</dbReference>
<dbReference type="RefSeq" id="NP_790357.1">
    <property type="nucleotide sequence ID" value="NC_004578.1"/>
</dbReference>
<dbReference type="RefSeq" id="WP_005763799.1">
    <property type="nucleotide sequence ID" value="NC_004578.1"/>
</dbReference>
<dbReference type="SMR" id="Q88A84"/>
<dbReference type="STRING" id="223283.PSPTO_0509"/>
<dbReference type="DNASU" id="1182118"/>
<dbReference type="GeneID" id="1182118"/>
<dbReference type="KEGG" id="pst:PSPTO_0509"/>
<dbReference type="PATRIC" id="fig|223283.9.peg.524"/>
<dbReference type="eggNOG" id="COG0535">
    <property type="taxonomic scope" value="Bacteria"/>
</dbReference>
<dbReference type="HOGENOM" id="CLU_009273_4_7_6"/>
<dbReference type="OrthoDB" id="9792276at2"/>
<dbReference type="PhylomeDB" id="Q88A84"/>
<dbReference type="UniPathway" id="UPA00539"/>
<dbReference type="Proteomes" id="UP000002515">
    <property type="component" value="Chromosome"/>
</dbReference>
<dbReference type="GO" id="GO:0051539">
    <property type="term" value="F:4 iron, 4 sulfur cluster binding"/>
    <property type="evidence" value="ECO:0007669"/>
    <property type="project" value="UniProtKB-KW"/>
</dbReference>
<dbReference type="GO" id="GO:0009975">
    <property type="term" value="F:cyclase activity"/>
    <property type="evidence" value="ECO:0007669"/>
    <property type="project" value="UniProtKB-UniRule"/>
</dbReference>
<dbReference type="GO" id="GO:0005506">
    <property type="term" value="F:iron ion binding"/>
    <property type="evidence" value="ECO:0007669"/>
    <property type="project" value="UniProtKB-UniRule"/>
</dbReference>
<dbReference type="GO" id="GO:0016491">
    <property type="term" value="F:oxidoreductase activity"/>
    <property type="evidence" value="ECO:0007669"/>
    <property type="project" value="UniProtKB-KW"/>
</dbReference>
<dbReference type="GO" id="GO:1904047">
    <property type="term" value="F:S-adenosyl-L-methionine binding"/>
    <property type="evidence" value="ECO:0007669"/>
    <property type="project" value="UniProtKB-UniRule"/>
</dbReference>
<dbReference type="GO" id="GO:0018189">
    <property type="term" value="P:pyrroloquinoline quinone biosynthetic process"/>
    <property type="evidence" value="ECO:0007669"/>
    <property type="project" value="UniProtKB-UniRule"/>
</dbReference>
<dbReference type="CDD" id="cd01335">
    <property type="entry name" value="Radical_SAM"/>
    <property type="match status" value="1"/>
</dbReference>
<dbReference type="CDD" id="cd21119">
    <property type="entry name" value="SPASM_PqqE"/>
    <property type="match status" value="1"/>
</dbReference>
<dbReference type="Gene3D" id="3.20.20.70">
    <property type="entry name" value="Aldolase class I"/>
    <property type="match status" value="1"/>
</dbReference>
<dbReference type="HAMAP" id="MF_00660">
    <property type="entry name" value="PqqE"/>
    <property type="match status" value="1"/>
</dbReference>
<dbReference type="InterPro" id="IPR023885">
    <property type="entry name" value="4Fe4S-binding_SPASM_dom"/>
</dbReference>
<dbReference type="InterPro" id="IPR013785">
    <property type="entry name" value="Aldolase_TIM"/>
</dbReference>
<dbReference type="InterPro" id="IPR006638">
    <property type="entry name" value="Elp3/MiaA/NifB-like_rSAM"/>
</dbReference>
<dbReference type="InterPro" id="IPR000385">
    <property type="entry name" value="MoaA_NifB_PqqE_Fe-S-bd_CS"/>
</dbReference>
<dbReference type="InterPro" id="IPR011843">
    <property type="entry name" value="PQQ_synth_PqqE_bac"/>
</dbReference>
<dbReference type="InterPro" id="IPR017200">
    <property type="entry name" value="PqqE-like"/>
</dbReference>
<dbReference type="InterPro" id="IPR050377">
    <property type="entry name" value="Radical_SAM_PqqE_MftC-like"/>
</dbReference>
<dbReference type="InterPro" id="IPR007197">
    <property type="entry name" value="rSAM"/>
</dbReference>
<dbReference type="NCBIfam" id="TIGR02109">
    <property type="entry name" value="PQQ_syn_pqqE"/>
    <property type="match status" value="1"/>
</dbReference>
<dbReference type="NCBIfam" id="TIGR04085">
    <property type="entry name" value="rSAM_more_4Fe4S"/>
    <property type="match status" value="1"/>
</dbReference>
<dbReference type="PANTHER" id="PTHR11228:SF7">
    <property type="entry name" value="PQQA PEPTIDE CYCLASE"/>
    <property type="match status" value="1"/>
</dbReference>
<dbReference type="PANTHER" id="PTHR11228">
    <property type="entry name" value="RADICAL SAM DOMAIN PROTEIN"/>
    <property type="match status" value="1"/>
</dbReference>
<dbReference type="Pfam" id="PF13353">
    <property type="entry name" value="Fer4_12"/>
    <property type="match status" value="1"/>
</dbReference>
<dbReference type="Pfam" id="PF04055">
    <property type="entry name" value="Radical_SAM"/>
    <property type="match status" value="1"/>
</dbReference>
<dbReference type="Pfam" id="PF13186">
    <property type="entry name" value="SPASM"/>
    <property type="match status" value="1"/>
</dbReference>
<dbReference type="PIRSF" id="PIRSF037420">
    <property type="entry name" value="PQQ_syn_pqqE"/>
    <property type="match status" value="1"/>
</dbReference>
<dbReference type="SFLD" id="SFLDF00280">
    <property type="entry name" value="coenzyme_PQQ_synthesis_protein"/>
    <property type="match status" value="1"/>
</dbReference>
<dbReference type="SFLD" id="SFLDS00029">
    <property type="entry name" value="Radical_SAM"/>
    <property type="match status" value="1"/>
</dbReference>
<dbReference type="SMART" id="SM00729">
    <property type="entry name" value="Elp3"/>
    <property type="match status" value="1"/>
</dbReference>
<dbReference type="SUPFAM" id="SSF102114">
    <property type="entry name" value="Radical SAM enzymes"/>
    <property type="match status" value="1"/>
</dbReference>
<dbReference type="PROSITE" id="PS01305">
    <property type="entry name" value="MOAA_NIFB_PQQE"/>
    <property type="match status" value="1"/>
</dbReference>
<dbReference type="PROSITE" id="PS51918">
    <property type="entry name" value="RADICAL_SAM"/>
    <property type="match status" value="1"/>
</dbReference>
<name>PQQE_PSESM</name>
<comment type="function">
    <text evidence="1">Catalyzes the cross-linking of a glutamate residue and a tyrosine residue in the PqqA protein as part of the biosynthesis of pyrroloquinoline quinone (PQQ).</text>
</comment>
<comment type="catalytic activity">
    <reaction evidence="1">
        <text>[PQQ precursor protein] + S-adenosyl-L-methionine = E-Y cross-linked-[PQQ precursor protein] + 5'-deoxyadenosine + L-methionine + H(+)</text>
        <dbReference type="Rhea" id="RHEA:56836"/>
        <dbReference type="Rhea" id="RHEA-COMP:14800"/>
        <dbReference type="Rhea" id="RHEA-COMP:14801"/>
        <dbReference type="ChEBI" id="CHEBI:15378"/>
        <dbReference type="ChEBI" id="CHEBI:17319"/>
        <dbReference type="ChEBI" id="CHEBI:57844"/>
        <dbReference type="ChEBI" id="CHEBI:59789"/>
        <dbReference type="ChEBI" id="CHEBI:141026"/>
        <dbReference type="ChEBI" id="CHEBI:141027"/>
        <dbReference type="EC" id="1.21.98.4"/>
    </reaction>
</comment>
<comment type="cofactor">
    <cofactor evidence="1">
        <name>[4Fe-4S] cluster</name>
        <dbReference type="ChEBI" id="CHEBI:49883"/>
    </cofactor>
    <text evidence="1">Binds 1 [4Fe-4S] cluster. The cluster is coordinated with 3 cysteines and an exchangeable S-adenosyl-L-methionine.</text>
</comment>
<comment type="pathway">
    <text evidence="1">Cofactor biosynthesis; pyrroloquinoline quinone biosynthesis.</text>
</comment>
<comment type="subunit">
    <text evidence="1">Interacts with PqqD. The interaction is necessary for activity of PqqE.</text>
</comment>
<comment type="similarity">
    <text evidence="1">Belongs to the radical SAM superfamily. PqqE family.</text>
</comment>
<evidence type="ECO:0000255" key="1">
    <source>
        <dbReference type="HAMAP-Rule" id="MF_00660"/>
    </source>
</evidence>
<evidence type="ECO:0000255" key="2">
    <source>
        <dbReference type="PROSITE-ProRule" id="PRU01266"/>
    </source>
</evidence>
<proteinExistence type="inferred from homology"/>
<organism>
    <name type="scientific">Pseudomonas syringae pv. tomato (strain ATCC BAA-871 / DC3000)</name>
    <dbReference type="NCBI Taxonomy" id="223283"/>
    <lineage>
        <taxon>Bacteria</taxon>
        <taxon>Pseudomonadati</taxon>
        <taxon>Pseudomonadota</taxon>
        <taxon>Gammaproteobacteria</taxon>
        <taxon>Pseudomonadales</taxon>
        <taxon>Pseudomonadaceae</taxon>
        <taxon>Pseudomonas</taxon>
    </lineage>
</organism>
<sequence length="389" mass="43917">MSDIAPAAHSPYIPPTPEVGLPLWLLAELTYRCPLQCPYCSNPLDFARQGQELTTEQWFKVMQEAREMGAAQIGFSGGEPLVRQDLAELIAEARRLGFYTNLITSGIGLTEEKIIAFKKAGLDHIQISFQASDEQVNNMLAGSKKAFAQKLEMAKAVKKHGYPMVLNFVTHRHNIDRIDKIIELCLALEADFVELATCQFYGWAHLNRVGLLPTKDQLVRAEAVTNEYRDQLAAQDHPCKLIFVTPDYYEERPKACMNGWGNIFLTVTPDGTALPCHGARQMPIQFPNVREHSMQHIWYDSFGFNRFRGYDWMPEPCRSCDEKEKDFGGCRCQAFMLTGDAANADPVCSKSYHHGIITQARDESETATQTIEELAFRNDRNSRLIAKSS</sequence>